<dbReference type="EMBL" id="CP000260">
    <property type="protein sequence ID" value="ABF34913.1"/>
    <property type="status" value="ALT_INIT"/>
    <property type="molecule type" value="Genomic_DNA"/>
</dbReference>
<dbReference type="RefSeq" id="WP_002982258.1">
    <property type="nucleotide sequence ID" value="NZ_CVUH01000011.1"/>
</dbReference>
<dbReference type="SMR" id="Q1JEJ6"/>
<dbReference type="GeneID" id="69901553"/>
<dbReference type="KEGG" id="sph:MGAS10270_Spy1848"/>
<dbReference type="HOGENOM" id="CLU_047155_0_1_9"/>
<dbReference type="Proteomes" id="UP000002436">
    <property type="component" value="Chromosome"/>
</dbReference>
<dbReference type="GO" id="GO:0005737">
    <property type="term" value="C:cytoplasm"/>
    <property type="evidence" value="ECO:0007669"/>
    <property type="project" value="UniProtKB-SubCell"/>
</dbReference>
<dbReference type="GO" id="GO:0003746">
    <property type="term" value="F:translation elongation factor activity"/>
    <property type="evidence" value="ECO:0007669"/>
    <property type="project" value="UniProtKB-UniRule"/>
</dbReference>
<dbReference type="CDD" id="cd14275">
    <property type="entry name" value="UBA_EF-Ts"/>
    <property type="match status" value="1"/>
</dbReference>
<dbReference type="FunFam" id="1.10.286.20:FF:000004">
    <property type="entry name" value="Elongation factor Ts"/>
    <property type="match status" value="1"/>
</dbReference>
<dbReference type="FunFam" id="1.10.8.10:FF:000001">
    <property type="entry name" value="Elongation factor Ts"/>
    <property type="match status" value="1"/>
</dbReference>
<dbReference type="FunFam" id="3.30.479.20:FF:000013">
    <property type="entry name" value="Elongation factor Ts"/>
    <property type="match status" value="1"/>
</dbReference>
<dbReference type="Gene3D" id="1.10.286.20">
    <property type="match status" value="1"/>
</dbReference>
<dbReference type="Gene3D" id="1.10.8.10">
    <property type="entry name" value="DNA helicase RuvA subunit, C-terminal domain"/>
    <property type="match status" value="1"/>
</dbReference>
<dbReference type="Gene3D" id="3.30.479.20">
    <property type="entry name" value="Elongation factor Ts, dimerisation domain"/>
    <property type="match status" value="2"/>
</dbReference>
<dbReference type="HAMAP" id="MF_00050">
    <property type="entry name" value="EF_Ts"/>
    <property type="match status" value="1"/>
</dbReference>
<dbReference type="InterPro" id="IPR036402">
    <property type="entry name" value="EF-Ts_dimer_sf"/>
</dbReference>
<dbReference type="InterPro" id="IPR001816">
    <property type="entry name" value="Transl_elong_EFTs/EF1B"/>
</dbReference>
<dbReference type="InterPro" id="IPR014039">
    <property type="entry name" value="Transl_elong_EFTs/EF1B_dimer"/>
</dbReference>
<dbReference type="InterPro" id="IPR018101">
    <property type="entry name" value="Transl_elong_Ts_CS"/>
</dbReference>
<dbReference type="InterPro" id="IPR009060">
    <property type="entry name" value="UBA-like_sf"/>
</dbReference>
<dbReference type="NCBIfam" id="TIGR00116">
    <property type="entry name" value="tsf"/>
    <property type="match status" value="1"/>
</dbReference>
<dbReference type="PANTHER" id="PTHR11741">
    <property type="entry name" value="ELONGATION FACTOR TS"/>
    <property type="match status" value="1"/>
</dbReference>
<dbReference type="PANTHER" id="PTHR11741:SF0">
    <property type="entry name" value="ELONGATION FACTOR TS, MITOCHONDRIAL"/>
    <property type="match status" value="1"/>
</dbReference>
<dbReference type="Pfam" id="PF00889">
    <property type="entry name" value="EF_TS"/>
    <property type="match status" value="1"/>
</dbReference>
<dbReference type="SUPFAM" id="SSF54713">
    <property type="entry name" value="Elongation factor Ts (EF-Ts), dimerisation domain"/>
    <property type="match status" value="1"/>
</dbReference>
<dbReference type="SUPFAM" id="SSF46934">
    <property type="entry name" value="UBA-like"/>
    <property type="match status" value="1"/>
</dbReference>
<dbReference type="PROSITE" id="PS01126">
    <property type="entry name" value="EF_TS_1"/>
    <property type="match status" value="1"/>
</dbReference>
<dbReference type="PROSITE" id="PS01127">
    <property type="entry name" value="EF_TS_2"/>
    <property type="match status" value="1"/>
</dbReference>
<gene>
    <name evidence="1" type="primary">tsf</name>
    <name type="ordered locus">MGAS10270_Spy1848</name>
</gene>
<feature type="chain" id="PRO_0000323469" description="Elongation factor Ts">
    <location>
        <begin position="1"/>
        <end position="346"/>
    </location>
</feature>
<feature type="region of interest" description="Involved in Mg(2+) ion dislocation from EF-Tu" evidence="1">
    <location>
        <begin position="80"/>
        <end position="83"/>
    </location>
</feature>
<name>EFTS_STRPD</name>
<organism>
    <name type="scientific">Streptococcus pyogenes serotype M2 (strain MGAS10270)</name>
    <dbReference type="NCBI Taxonomy" id="370552"/>
    <lineage>
        <taxon>Bacteria</taxon>
        <taxon>Bacillati</taxon>
        <taxon>Bacillota</taxon>
        <taxon>Bacilli</taxon>
        <taxon>Lactobacillales</taxon>
        <taxon>Streptococcaceae</taxon>
        <taxon>Streptococcus</taxon>
    </lineage>
</organism>
<protein>
    <recommendedName>
        <fullName evidence="1">Elongation factor Ts</fullName>
        <shortName evidence="1">EF-Ts</shortName>
    </recommendedName>
</protein>
<comment type="function">
    <text evidence="1">Associates with the EF-Tu.GDP complex and induces the exchange of GDP to GTP. It remains bound to the aminoacyl-tRNA.EF-Tu.GTP complex up to the GTP hydrolysis stage on the ribosome.</text>
</comment>
<comment type="subcellular location">
    <subcellularLocation>
        <location evidence="1">Cytoplasm</location>
    </subcellularLocation>
</comment>
<comment type="similarity">
    <text evidence="1">Belongs to the EF-Ts family.</text>
</comment>
<comment type="sequence caution" evidence="2">
    <conflict type="erroneous initiation">
        <sequence resource="EMBL-CDS" id="ABF34913"/>
    </conflict>
</comment>
<proteinExistence type="inferred from homology"/>
<reference key="1">
    <citation type="journal article" date="2006" name="Proc. Natl. Acad. Sci. U.S.A.">
        <title>Molecular genetic anatomy of inter- and intraserotype variation in the human bacterial pathogen group A Streptococcus.</title>
        <authorList>
            <person name="Beres S.B."/>
            <person name="Richter E.W."/>
            <person name="Nagiec M.J."/>
            <person name="Sumby P."/>
            <person name="Porcella S.F."/>
            <person name="DeLeo F.R."/>
            <person name="Musser J.M."/>
        </authorList>
    </citation>
    <scope>NUCLEOTIDE SEQUENCE [LARGE SCALE GENOMIC DNA]</scope>
    <source>
        <strain>MGAS10270</strain>
    </source>
</reference>
<accession>Q1JEJ6</accession>
<sequence>MAEITAKLVKELREKSGAGVMDAKKALVETDGDMDKAVELLREKGMAKAAKKADRVAAEGLTGVYVHGNVAAVVEVNAETDFVAKNAQFVELVNATAKVIAEGKPANNDEALALVMPSGETLAEAYVNATATIGEKISFRRFALIEKTDEQHFGAYQHNGGRIGVISVVEGGDDALAKQVSMHIAAMKPTVLSYTELDAQFIKDELAQLNHAIELDNESRAMVDKPALPFLKYGSKAQLSDDVITAAEADIKAELAAEGKPEKIWDKIIPGKMDRFMLDNTKVDQAYTLLAQVYIMDDSKTVEAYLDSVNAKAIAFARFEVGEGIEKKANDFESEVAATMAAALNN</sequence>
<keyword id="KW-0963">Cytoplasm</keyword>
<keyword id="KW-0251">Elongation factor</keyword>
<keyword id="KW-0648">Protein biosynthesis</keyword>
<evidence type="ECO:0000255" key="1">
    <source>
        <dbReference type="HAMAP-Rule" id="MF_00050"/>
    </source>
</evidence>
<evidence type="ECO:0000305" key="2"/>